<name>TRPR_CHLTR</name>
<evidence type="ECO:0000250" key="1"/>
<evidence type="ECO:0000305" key="2"/>
<sequence length="94" mass="10932">MKNQEESGWQAFLTLCSKMQKEKFLQDLFSLFLSFSERKDVASRYHIIRALLEGELTQREIAEKYGVSIAQITRGSNALKGLDPQFKEFLQKEI</sequence>
<proteinExistence type="inferred from homology"/>
<protein>
    <recommendedName>
        <fullName>Trp operon repressor homolog</fullName>
    </recommendedName>
</protein>
<organism>
    <name type="scientific">Chlamydia trachomatis serovar D (strain ATCC VR-885 / DSM 19411 / UW-3/Cx)</name>
    <dbReference type="NCBI Taxonomy" id="272561"/>
    <lineage>
        <taxon>Bacteria</taxon>
        <taxon>Pseudomonadati</taxon>
        <taxon>Chlamydiota</taxon>
        <taxon>Chlamydiia</taxon>
        <taxon>Chlamydiales</taxon>
        <taxon>Chlamydiaceae</taxon>
        <taxon>Chlamydia/Chlamydophila group</taxon>
        <taxon>Chlamydia</taxon>
    </lineage>
</organism>
<feature type="chain" id="PRO_0000196508" description="Trp operon repressor homolog">
    <location>
        <begin position="1"/>
        <end position="94"/>
    </location>
</feature>
<feature type="DNA-binding region" evidence="1">
    <location>
        <begin position="58"/>
        <end position="81"/>
    </location>
</feature>
<comment type="function">
    <text evidence="1">This protein is an aporepressor. When complexed with L-tryptophan it binds the operator region of the trp operon and prevents the initiation of transcription (By similarity).</text>
</comment>
<comment type="subunit">
    <text evidence="1">Homodimer.</text>
</comment>
<comment type="subcellular location">
    <subcellularLocation>
        <location evidence="1">Cytoplasm</location>
    </subcellularLocation>
</comment>
<comment type="similarity">
    <text evidence="2">Belongs to the TrpR family.</text>
</comment>
<accession>O84171</accession>
<keyword id="KW-0963">Cytoplasm</keyword>
<keyword id="KW-0238">DNA-binding</keyword>
<keyword id="KW-1185">Reference proteome</keyword>
<keyword id="KW-0678">Repressor</keyword>
<keyword id="KW-0804">Transcription</keyword>
<keyword id="KW-0805">Transcription regulation</keyword>
<reference key="1">
    <citation type="journal article" date="1998" name="Science">
        <title>Genome sequence of an obligate intracellular pathogen of humans: Chlamydia trachomatis.</title>
        <authorList>
            <person name="Stephens R.S."/>
            <person name="Kalman S."/>
            <person name="Lammel C.J."/>
            <person name="Fan J."/>
            <person name="Marathe R."/>
            <person name="Aravind L."/>
            <person name="Mitchell W.P."/>
            <person name="Olinger L."/>
            <person name="Tatusov R.L."/>
            <person name="Zhao Q."/>
            <person name="Koonin E.V."/>
            <person name="Davis R.W."/>
        </authorList>
    </citation>
    <scope>NUCLEOTIDE SEQUENCE [LARGE SCALE GENOMIC DNA]</scope>
    <source>
        <strain>ATCC VR-885 / DSM 19411 / UW-3/Cx</strain>
    </source>
</reference>
<gene>
    <name type="primary">trpR</name>
    <name type="ordered locus">CT_169</name>
</gene>
<dbReference type="EMBL" id="AE001273">
    <property type="protein sequence ID" value="AAC67760.1"/>
    <property type="molecule type" value="Genomic_DNA"/>
</dbReference>
<dbReference type="PIR" id="H71549">
    <property type="entry name" value="H71549"/>
</dbReference>
<dbReference type="RefSeq" id="NP_219672.1">
    <property type="nucleotide sequence ID" value="NC_000117.1"/>
</dbReference>
<dbReference type="RefSeq" id="WP_009871513.1">
    <property type="nucleotide sequence ID" value="NC_000117.1"/>
</dbReference>
<dbReference type="SMR" id="O84171"/>
<dbReference type="STRING" id="272561.CT_169"/>
<dbReference type="EnsemblBacteria" id="AAC67760">
    <property type="protein sequence ID" value="AAC67760"/>
    <property type="gene ID" value="CT_169"/>
</dbReference>
<dbReference type="GeneID" id="884964"/>
<dbReference type="KEGG" id="ctr:CT_169"/>
<dbReference type="PATRIC" id="fig|272561.5.peg.182"/>
<dbReference type="HOGENOM" id="CLU_147939_0_2_0"/>
<dbReference type="InParanoid" id="O84171"/>
<dbReference type="OrthoDB" id="370734at2"/>
<dbReference type="Proteomes" id="UP000000431">
    <property type="component" value="Chromosome"/>
</dbReference>
<dbReference type="GO" id="GO:0005737">
    <property type="term" value="C:cytoplasm"/>
    <property type="evidence" value="ECO:0007669"/>
    <property type="project" value="UniProtKB-SubCell"/>
</dbReference>
<dbReference type="GO" id="GO:0003700">
    <property type="term" value="F:DNA-binding transcription factor activity"/>
    <property type="evidence" value="ECO:0007669"/>
    <property type="project" value="InterPro"/>
</dbReference>
<dbReference type="GO" id="GO:0043565">
    <property type="term" value="F:sequence-specific DNA binding"/>
    <property type="evidence" value="ECO:0000318"/>
    <property type="project" value="GO_Central"/>
</dbReference>
<dbReference type="GO" id="GO:0045892">
    <property type="term" value="P:negative regulation of DNA-templated transcription"/>
    <property type="evidence" value="ECO:0007669"/>
    <property type="project" value="UniProtKB-UniRule"/>
</dbReference>
<dbReference type="GO" id="GO:0006355">
    <property type="term" value="P:regulation of DNA-templated transcription"/>
    <property type="evidence" value="ECO:0000318"/>
    <property type="project" value="GO_Central"/>
</dbReference>
<dbReference type="FunFam" id="1.10.1270.10:FF:000004">
    <property type="entry name" value="Trp operon repressor homolog"/>
    <property type="match status" value="1"/>
</dbReference>
<dbReference type="Gene3D" id="1.10.1270.10">
    <property type="entry name" value="TrpR-like"/>
    <property type="match status" value="1"/>
</dbReference>
<dbReference type="HAMAP" id="MF_00475">
    <property type="entry name" value="Trp_repressor"/>
    <property type="match status" value="1"/>
</dbReference>
<dbReference type="InterPro" id="IPR000831">
    <property type="entry name" value="Trp_repress"/>
</dbReference>
<dbReference type="InterPro" id="IPR013335">
    <property type="entry name" value="Trp_repress_bac"/>
</dbReference>
<dbReference type="InterPro" id="IPR010921">
    <property type="entry name" value="Trp_repressor/repl_initiator"/>
</dbReference>
<dbReference type="InterPro" id="IPR038116">
    <property type="entry name" value="TrpR-like_sf"/>
</dbReference>
<dbReference type="NCBIfam" id="TIGR01321">
    <property type="entry name" value="TrpR"/>
    <property type="match status" value="1"/>
</dbReference>
<dbReference type="PANTHER" id="PTHR38025">
    <property type="entry name" value="TRP OPERON REPRESSOR"/>
    <property type="match status" value="1"/>
</dbReference>
<dbReference type="PANTHER" id="PTHR38025:SF1">
    <property type="entry name" value="TRP OPERON REPRESSOR"/>
    <property type="match status" value="1"/>
</dbReference>
<dbReference type="Pfam" id="PF01371">
    <property type="entry name" value="Trp_repressor"/>
    <property type="match status" value="1"/>
</dbReference>
<dbReference type="PIRSF" id="PIRSF003196">
    <property type="entry name" value="Trp_repressor"/>
    <property type="match status" value="1"/>
</dbReference>
<dbReference type="SUPFAM" id="SSF48295">
    <property type="entry name" value="TrpR-like"/>
    <property type="match status" value="1"/>
</dbReference>